<keyword id="KW-0687">Ribonucleoprotein</keyword>
<keyword id="KW-0689">Ribosomal protein</keyword>
<keyword id="KW-0694">RNA-binding</keyword>
<keyword id="KW-0699">rRNA-binding</keyword>
<sequence>MPKVTVYNQTGSQVGEIELAEAIFGIEPNEAVLFEAVMMQRASLRQGTHKVKTRSEVRGGGRKPWRQKGTGRARQGSIRSPQWRGGGTVFGPTPRSYAYKLPKKVRRLAIKSALATKVVENNIVVLEDLVLNAPKTKDMLAVLKGLTVEKKALIVTADANESVELSARNIPGVTVITADGVNVLDVLHHDKLIMTKAAVEKVEEVLA</sequence>
<organism>
    <name type="scientific">Bacillus thuringiensis (strain Al Hakam)</name>
    <dbReference type="NCBI Taxonomy" id="412694"/>
    <lineage>
        <taxon>Bacteria</taxon>
        <taxon>Bacillati</taxon>
        <taxon>Bacillota</taxon>
        <taxon>Bacilli</taxon>
        <taxon>Bacillales</taxon>
        <taxon>Bacillaceae</taxon>
        <taxon>Bacillus</taxon>
        <taxon>Bacillus cereus group</taxon>
    </lineage>
</organism>
<comment type="function">
    <text evidence="1">One of the primary rRNA binding proteins, this protein initially binds near the 5'-end of the 23S rRNA. It is important during the early stages of 50S assembly. It makes multiple contacts with different domains of the 23S rRNA in the assembled 50S subunit and ribosome.</text>
</comment>
<comment type="function">
    <text evidence="1">Forms part of the polypeptide exit tunnel.</text>
</comment>
<comment type="subunit">
    <text evidence="1">Part of the 50S ribosomal subunit.</text>
</comment>
<comment type="similarity">
    <text evidence="1">Belongs to the universal ribosomal protein uL4 family.</text>
</comment>
<evidence type="ECO:0000255" key="1">
    <source>
        <dbReference type="HAMAP-Rule" id="MF_01328"/>
    </source>
</evidence>
<evidence type="ECO:0000256" key="2">
    <source>
        <dbReference type="SAM" id="MobiDB-lite"/>
    </source>
</evidence>
<evidence type="ECO:0000305" key="3"/>
<accession>A0R8I1</accession>
<dbReference type="EMBL" id="CP000485">
    <property type="protein sequence ID" value="ABK83524.1"/>
    <property type="molecule type" value="Genomic_DNA"/>
</dbReference>
<dbReference type="RefSeq" id="WP_001127258.1">
    <property type="nucleotide sequence ID" value="NC_008600.1"/>
</dbReference>
<dbReference type="SMR" id="A0R8I1"/>
<dbReference type="GeneID" id="93010942"/>
<dbReference type="KEGG" id="btl:BALH_0109"/>
<dbReference type="HOGENOM" id="CLU_041575_5_2_9"/>
<dbReference type="GO" id="GO:1990904">
    <property type="term" value="C:ribonucleoprotein complex"/>
    <property type="evidence" value="ECO:0007669"/>
    <property type="project" value="UniProtKB-KW"/>
</dbReference>
<dbReference type="GO" id="GO:0005840">
    <property type="term" value="C:ribosome"/>
    <property type="evidence" value="ECO:0007669"/>
    <property type="project" value="UniProtKB-KW"/>
</dbReference>
<dbReference type="GO" id="GO:0019843">
    <property type="term" value="F:rRNA binding"/>
    <property type="evidence" value="ECO:0007669"/>
    <property type="project" value="UniProtKB-UniRule"/>
</dbReference>
<dbReference type="GO" id="GO:0003735">
    <property type="term" value="F:structural constituent of ribosome"/>
    <property type="evidence" value="ECO:0007669"/>
    <property type="project" value="InterPro"/>
</dbReference>
<dbReference type="GO" id="GO:0006412">
    <property type="term" value="P:translation"/>
    <property type="evidence" value="ECO:0007669"/>
    <property type="project" value="UniProtKB-UniRule"/>
</dbReference>
<dbReference type="FunFam" id="3.40.1370.10:FF:000003">
    <property type="entry name" value="50S ribosomal protein L4"/>
    <property type="match status" value="1"/>
</dbReference>
<dbReference type="Gene3D" id="3.40.1370.10">
    <property type="match status" value="1"/>
</dbReference>
<dbReference type="HAMAP" id="MF_01328_B">
    <property type="entry name" value="Ribosomal_uL4_B"/>
    <property type="match status" value="1"/>
</dbReference>
<dbReference type="InterPro" id="IPR002136">
    <property type="entry name" value="Ribosomal_uL4"/>
</dbReference>
<dbReference type="InterPro" id="IPR013005">
    <property type="entry name" value="Ribosomal_uL4-like"/>
</dbReference>
<dbReference type="InterPro" id="IPR023574">
    <property type="entry name" value="Ribosomal_uL4_dom_sf"/>
</dbReference>
<dbReference type="NCBIfam" id="TIGR03953">
    <property type="entry name" value="rplD_bact"/>
    <property type="match status" value="1"/>
</dbReference>
<dbReference type="PANTHER" id="PTHR10746">
    <property type="entry name" value="50S RIBOSOMAL PROTEIN L4"/>
    <property type="match status" value="1"/>
</dbReference>
<dbReference type="PANTHER" id="PTHR10746:SF6">
    <property type="entry name" value="LARGE RIBOSOMAL SUBUNIT PROTEIN UL4M"/>
    <property type="match status" value="1"/>
</dbReference>
<dbReference type="Pfam" id="PF00573">
    <property type="entry name" value="Ribosomal_L4"/>
    <property type="match status" value="1"/>
</dbReference>
<dbReference type="SUPFAM" id="SSF52166">
    <property type="entry name" value="Ribosomal protein L4"/>
    <property type="match status" value="1"/>
</dbReference>
<gene>
    <name evidence="1" type="primary">rplD</name>
    <name type="ordered locus">BALH_0109</name>
</gene>
<feature type="chain" id="PRO_1000052355" description="Large ribosomal subunit protein uL4">
    <location>
        <begin position="1"/>
        <end position="207"/>
    </location>
</feature>
<feature type="region of interest" description="Disordered" evidence="2">
    <location>
        <begin position="45"/>
        <end position="89"/>
    </location>
</feature>
<feature type="compositionally biased region" description="Basic residues" evidence="2">
    <location>
        <begin position="60"/>
        <end position="71"/>
    </location>
</feature>
<proteinExistence type="inferred from homology"/>
<reference key="1">
    <citation type="journal article" date="2007" name="J. Bacteriol.">
        <title>The complete genome sequence of Bacillus thuringiensis Al Hakam.</title>
        <authorList>
            <person name="Challacombe J.F."/>
            <person name="Altherr M.R."/>
            <person name="Xie G."/>
            <person name="Bhotika S.S."/>
            <person name="Brown N."/>
            <person name="Bruce D."/>
            <person name="Campbell C.S."/>
            <person name="Campbell M.L."/>
            <person name="Chen J."/>
            <person name="Chertkov O."/>
            <person name="Cleland C."/>
            <person name="Dimitrijevic M."/>
            <person name="Doggett N.A."/>
            <person name="Fawcett J.J."/>
            <person name="Glavina T."/>
            <person name="Goodwin L.A."/>
            <person name="Green L.D."/>
            <person name="Han C.S."/>
            <person name="Hill K.K."/>
            <person name="Hitchcock P."/>
            <person name="Jackson P.J."/>
            <person name="Keim P."/>
            <person name="Kewalramani A.R."/>
            <person name="Longmire J."/>
            <person name="Lucas S."/>
            <person name="Malfatti S."/>
            <person name="Martinez D."/>
            <person name="McMurry K."/>
            <person name="Meincke L.J."/>
            <person name="Misra M."/>
            <person name="Moseman B.L."/>
            <person name="Mundt M."/>
            <person name="Munk A.C."/>
            <person name="Okinaka R.T."/>
            <person name="Parson-Quintana B."/>
            <person name="Reilly L.P."/>
            <person name="Richardson P."/>
            <person name="Robinson D.L."/>
            <person name="Saunders E."/>
            <person name="Tapia R."/>
            <person name="Tesmer J.G."/>
            <person name="Thayer N."/>
            <person name="Thompson L.S."/>
            <person name="Tice H."/>
            <person name="Ticknor L.O."/>
            <person name="Wills P.L."/>
            <person name="Gilna P."/>
            <person name="Brettin T.S."/>
        </authorList>
    </citation>
    <scope>NUCLEOTIDE SEQUENCE [LARGE SCALE GENOMIC DNA]</scope>
    <source>
        <strain>Al Hakam</strain>
    </source>
</reference>
<protein>
    <recommendedName>
        <fullName evidence="1">Large ribosomal subunit protein uL4</fullName>
    </recommendedName>
    <alternativeName>
        <fullName evidence="3">50S ribosomal protein L4</fullName>
    </alternativeName>
</protein>
<name>RL4_BACAH</name>